<name>SYS_BRUMB</name>
<feature type="chain" id="PRO_1000123875" description="Serine--tRNA ligase">
    <location>
        <begin position="1"/>
        <end position="427"/>
    </location>
</feature>
<feature type="binding site" evidence="1">
    <location>
        <begin position="231"/>
        <end position="233"/>
    </location>
    <ligand>
        <name>L-serine</name>
        <dbReference type="ChEBI" id="CHEBI:33384"/>
    </ligand>
</feature>
<feature type="binding site" evidence="1">
    <location>
        <begin position="262"/>
        <end position="264"/>
    </location>
    <ligand>
        <name>ATP</name>
        <dbReference type="ChEBI" id="CHEBI:30616"/>
    </ligand>
</feature>
<feature type="binding site" evidence="1">
    <location>
        <position position="285"/>
    </location>
    <ligand>
        <name>L-serine</name>
        <dbReference type="ChEBI" id="CHEBI:33384"/>
    </ligand>
</feature>
<feature type="binding site" evidence="1">
    <location>
        <begin position="349"/>
        <end position="352"/>
    </location>
    <ligand>
        <name>ATP</name>
        <dbReference type="ChEBI" id="CHEBI:30616"/>
    </ligand>
</feature>
<feature type="binding site" evidence="1">
    <location>
        <position position="385"/>
    </location>
    <ligand>
        <name>L-serine</name>
        <dbReference type="ChEBI" id="CHEBI:33384"/>
    </ligand>
</feature>
<reference key="1">
    <citation type="submission" date="2009-03" db="EMBL/GenBank/DDBJ databases">
        <title>Brucella melitensis ATCC 23457 whole genome shotgun sequencing project.</title>
        <authorList>
            <person name="Setubal J.C."/>
            <person name="Boyle S."/>
            <person name="Crasta O.R."/>
            <person name="Gillespie J.J."/>
            <person name="Kenyon R.W."/>
            <person name="Lu J."/>
            <person name="Mane S."/>
            <person name="Nagrani S."/>
            <person name="Shallom J.M."/>
            <person name="Shallom S."/>
            <person name="Shukla M."/>
            <person name="Snyder E.E."/>
            <person name="Sobral B.W."/>
            <person name="Wattam A.R."/>
            <person name="Will R."/>
            <person name="Williams K."/>
            <person name="Yoo H."/>
            <person name="Munk C."/>
            <person name="Tapia R."/>
            <person name="Han C."/>
            <person name="Detter J.C."/>
            <person name="Bruce D."/>
            <person name="Brettin T.S."/>
        </authorList>
    </citation>
    <scope>NUCLEOTIDE SEQUENCE [LARGE SCALE GENOMIC DNA]</scope>
    <source>
        <strain>ATCC 23457</strain>
    </source>
</reference>
<accession>C0RIL8</accession>
<sequence length="427" mass="47520">MLDIKWIRENPETLDKALAKRGAAPLSSELIALDEKRREHVGKVQAAQERRNAASKEIGKAMAAKDMGTAEKLKAEVGELKDFLAHAEEDERRLSKELSDALSTIPNIPLDDVPLGKDESDNVELRRIGNPHNFSFQPKEHFELGEALGYMDFERAAKLAGARFTVLKGPLARLERALGQFMLDLHTTEHGYTEVMPPLMVRDEAVYGTGQLPKFSEDLFRTTDGRWLIPTAEVPLTNLVAEEIVDMKGLPLRFTALTPCFRSEAGSAGRDTRGMLRQHQFLKVEMVSITDAESSVAEHERMTACAEEVLKRLGLPFRTVVLCTGDMGFGAQRTYDIEVWLPGQNTYREISSCSTCGDFQGRRMNARYRPEGEKSTRFVHTLNGSGAAVGRALIAVMENYQQEDGSIHIPEALQPYMGGLTRIEKAA</sequence>
<gene>
    <name evidence="1" type="primary">serS</name>
    <name type="ordered locus">BMEA_A0923</name>
</gene>
<organism>
    <name type="scientific">Brucella melitensis biotype 2 (strain ATCC 23457)</name>
    <dbReference type="NCBI Taxonomy" id="546272"/>
    <lineage>
        <taxon>Bacteria</taxon>
        <taxon>Pseudomonadati</taxon>
        <taxon>Pseudomonadota</taxon>
        <taxon>Alphaproteobacteria</taxon>
        <taxon>Hyphomicrobiales</taxon>
        <taxon>Brucellaceae</taxon>
        <taxon>Brucella/Ochrobactrum group</taxon>
        <taxon>Brucella</taxon>
    </lineage>
</organism>
<protein>
    <recommendedName>
        <fullName evidence="1">Serine--tRNA ligase</fullName>
        <ecNumber evidence="1">6.1.1.11</ecNumber>
    </recommendedName>
    <alternativeName>
        <fullName evidence="1">Seryl-tRNA synthetase</fullName>
        <shortName evidence="1">SerRS</shortName>
    </alternativeName>
    <alternativeName>
        <fullName evidence="1">Seryl-tRNA(Ser/Sec) synthetase</fullName>
    </alternativeName>
</protein>
<keyword id="KW-0030">Aminoacyl-tRNA synthetase</keyword>
<keyword id="KW-0067">ATP-binding</keyword>
<keyword id="KW-0963">Cytoplasm</keyword>
<keyword id="KW-0436">Ligase</keyword>
<keyword id="KW-0547">Nucleotide-binding</keyword>
<keyword id="KW-0648">Protein biosynthesis</keyword>
<evidence type="ECO:0000255" key="1">
    <source>
        <dbReference type="HAMAP-Rule" id="MF_00176"/>
    </source>
</evidence>
<proteinExistence type="inferred from homology"/>
<comment type="function">
    <text evidence="1">Catalyzes the attachment of serine to tRNA(Ser). Is also able to aminoacylate tRNA(Sec) with serine, to form the misacylated tRNA L-seryl-tRNA(Sec), which will be further converted into selenocysteinyl-tRNA(Sec).</text>
</comment>
<comment type="catalytic activity">
    <reaction evidence="1">
        <text>tRNA(Ser) + L-serine + ATP = L-seryl-tRNA(Ser) + AMP + diphosphate + H(+)</text>
        <dbReference type="Rhea" id="RHEA:12292"/>
        <dbReference type="Rhea" id="RHEA-COMP:9669"/>
        <dbReference type="Rhea" id="RHEA-COMP:9703"/>
        <dbReference type="ChEBI" id="CHEBI:15378"/>
        <dbReference type="ChEBI" id="CHEBI:30616"/>
        <dbReference type="ChEBI" id="CHEBI:33019"/>
        <dbReference type="ChEBI" id="CHEBI:33384"/>
        <dbReference type="ChEBI" id="CHEBI:78442"/>
        <dbReference type="ChEBI" id="CHEBI:78533"/>
        <dbReference type="ChEBI" id="CHEBI:456215"/>
        <dbReference type="EC" id="6.1.1.11"/>
    </reaction>
</comment>
<comment type="catalytic activity">
    <reaction evidence="1">
        <text>tRNA(Sec) + L-serine + ATP = L-seryl-tRNA(Sec) + AMP + diphosphate + H(+)</text>
        <dbReference type="Rhea" id="RHEA:42580"/>
        <dbReference type="Rhea" id="RHEA-COMP:9742"/>
        <dbReference type="Rhea" id="RHEA-COMP:10128"/>
        <dbReference type="ChEBI" id="CHEBI:15378"/>
        <dbReference type="ChEBI" id="CHEBI:30616"/>
        <dbReference type="ChEBI" id="CHEBI:33019"/>
        <dbReference type="ChEBI" id="CHEBI:33384"/>
        <dbReference type="ChEBI" id="CHEBI:78442"/>
        <dbReference type="ChEBI" id="CHEBI:78533"/>
        <dbReference type="ChEBI" id="CHEBI:456215"/>
        <dbReference type="EC" id="6.1.1.11"/>
    </reaction>
</comment>
<comment type="pathway">
    <text evidence="1">Aminoacyl-tRNA biosynthesis; selenocysteinyl-tRNA(Sec) biosynthesis; L-seryl-tRNA(Sec) from L-serine and tRNA(Sec): step 1/1.</text>
</comment>
<comment type="subunit">
    <text evidence="1">Homodimer. The tRNA molecule binds across the dimer.</text>
</comment>
<comment type="subcellular location">
    <subcellularLocation>
        <location evidence="1">Cytoplasm</location>
    </subcellularLocation>
</comment>
<comment type="domain">
    <text evidence="1">Consists of two distinct domains, a catalytic core and a N-terminal extension that is involved in tRNA binding.</text>
</comment>
<comment type="similarity">
    <text evidence="1">Belongs to the class-II aminoacyl-tRNA synthetase family. Type-1 seryl-tRNA synthetase subfamily.</text>
</comment>
<dbReference type="EC" id="6.1.1.11" evidence="1"/>
<dbReference type="EMBL" id="CP001488">
    <property type="protein sequence ID" value="ACO00676.1"/>
    <property type="molecule type" value="Genomic_DNA"/>
</dbReference>
<dbReference type="RefSeq" id="WP_004683702.1">
    <property type="nucleotide sequence ID" value="NC_012441.1"/>
</dbReference>
<dbReference type="SMR" id="C0RIL8"/>
<dbReference type="GeneID" id="29593923"/>
<dbReference type="KEGG" id="bmi:BMEA_A0923"/>
<dbReference type="HOGENOM" id="CLU_023797_1_1_5"/>
<dbReference type="UniPathway" id="UPA00906">
    <property type="reaction ID" value="UER00895"/>
</dbReference>
<dbReference type="Proteomes" id="UP000001748">
    <property type="component" value="Chromosome I"/>
</dbReference>
<dbReference type="GO" id="GO:0005737">
    <property type="term" value="C:cytoplasm"/>
    <property type="evidence" value="ECO:0007669"/>
    <property type="project" value="UniProtKB-SubCell"/>
</dbReference>
<dbReference type="GO" id="GO:0005524">
    <property type="term" value="F:ATP binding"/>
    <property type="evidence" value="ECO:0007669"/>
    <property type="project" value="UniProtKB-UniRule"/>
</dbReference>
<dbReference type="GO" id="GO:0004828">
    <property type="term" value="F:serine-tRNA ligase activity"/>
    <property type="evidence" value="ECO:0007669"/>
    <property type="project" value="UniProtKB-UniRule"/>
</dbReference>
<dbReference type="GO" id="GO:0016260">
    <property type="term" value="P:selenocysteine biosynthetic process"/>
    <property type="evidence" value="ECO:0007669"/>
    <property type="project" value="UniProtKB-UniRule"/>
</dbReference>
<dbReference type="GO" id="GO:0006434">
    <property type="term" value="P:seryl-tRNA aminoacylation"/>
    <property type="evidence" value="ECO:0007669"/>
    <property type="project" value="UniProtKB-UniRule"/>
</dbReference>
<dbReference type="CDD" id="cd00770">
    <property type="entry name" value="SerRS_core"/>
    <property type="match status" value="1"/>
</dbReference>
<dbReference type="Gene3D" id="3.30.930.10">
    <property type="entry name" value="Bira Bifunctional Protein, Domain 2"/>
    <property type="match status" value="1"/>
</dbReference>
<dbReference type="Gene3D" id="1.10.287.40">
    <property type="entry name" value="Serine-tRNA synthetase, tRNA binding domain"/>
    <property type="match status" value="1"/>
</dbReference>
<dbReference type="HAMAP" id="MF_00176">
    <property type="entry name" value="Ser_tRNA_synth_type1"/>
    <property type="match status" value="1"/>
</dbReference>
<dbReference type="InterPro" id="IPR002314">
    <property type="entry name" value="aa-tRNA-synt_IIb"/>
</dbReference>
<dbReference type="InterPro" id="IPR006195">
    <property type="entry name" value="aa-tRNA-synth_II"/>
</dbReference>
<dbReference type="InterPro" id="IPR045864">
    <property type="entry name" value="aa-tRNA-synth_II/BPL/LPL"/>
</dbReference>
<dbReference type="InterPro" id="IPR002317">
    <property type="entry name" value="Ser-tRNA-ligase_type_1"/>
</dbReference>
<dbReference type="InterPro" id="IPR015866">
    <property type="entry name" value="Ser-tRNA-synth_1_N"/>
</dbReference>
<dbReference type="InterPro" id="IPR042103">
    <property type="entry name" value="SerRS_1_N_sf"/>
</dbReference>
<dbReference type="InterPro" id="IPR033729">
    <property type="entry name" value="SerRS_core"/>
</dbReference>
<dbReference type="InterPro" id="IPR010978">
    <property type="entry name" value="tRNA-bd_arm"/>
</dbReference>
<dbReference type="NCBIfam" id="TIGR00414">
    <property type="entry name" value="serS"/>
    <property type="match status" value="1"/>
</dbReference>
<dbReference type="PANTHER" id="PTHR43697:SF1">
    <property type="entry name" value="SERINE--TRNA LIGASE"/>
    <property type="match status" value="1"/>
</dbReference>
<dbReference type="PANTHER" id="PTHR43697">
    <property type="entry name" value="SERYL-TRNA SYNTHETASE"/>
    <property type="match status" value="1"/>
</dbReference>
<dbReference type="Pfam" id="PF02403">
    <property type="entry name" value="Seryl_tRNA_N"/>
    <property type="match status" value="1"/>
</dbReference>
<dbReference type="Pfam" id="PF00587">
    <property type="entry name" value="tRNA-synt_2b"/>
    <property type="match status" value="1"/>
</dbReference>
<dbReference type="PIRSF" id="PIRSF001529">
    <property type="entry name" value="Ser-tRNA-synth_IIa"/>
    <property type="match status" value="1"/>
</dbReference>
<dbReference type="PRINTS" id="PR00981">
    <property type="entry name" value="TRNASYNTHSER"/>
</dbReference>
<dbReference type="SUPFAM" id="SSF55681">
    <property type="entry name" value="Class II aaRS and biotin synthetases"/>
    <property type="match status" value="1"/>
</dbReference>
<dbReference type="SUPFAM" id="SSF46589">
    <property type="entry name" value="tRNA-binding arm"/>
    <property type="match status" value="1"/>
</dbReference>
<dbReference type="PROSITE" id="PS50862">
    <property type="entry name" value="AA_TRNA_LIGASE_II"/>
    <property type="match status" value="1"/>
</dbReference>